<protein>
    <recommendedName>
        <fullName evidence="1">RPA-related protein RADX</fullName>
    </recommendedName>
</protein>
<feature type="chain" id="PRO_0000254128" description="RPA-related protein RADX">
    <location>
        <begin position="1"/>
        <end position="850"/>
    </location>
</feature>
<feature type="DNA-binding region" description="OB" evidence="1">
    <location>
        <begin position="228"/>
        <end position="331"/>
    </location>
</feature>
<feature type="region of interest" description="Disordered" evidence="2">
    <location>
        <begin position="1"/>
        <end position="31"/>
    </location>
</feature>
<feature type="region of interest" description="Disordered" evidence="2">
    <location>
        <begin position="575"/>
        <end position="612"/>
    </location>
</feature>
<feature type="region of interest" description="Disordered" evidence="2">
    <location>
        <begin position="632"/>
        <end position="671"/>
    </location>
</feature>
<feature type="compositionally biased region" description="Basic and acidic residues" evidence="2">
    <location>
        <begin position="590"/>
        <end position="608"/>
    </location>
</feature>
<feature type="compositionally biased region" description="Polar residues" evidence="2">
    <location>
        <begin position="643"/>
        <end position="668"/>
    </location>
</feature>
<feature type="splice variant" id="VSP_021184" description="In isoform 2." evidence="3">
    <location>
        <position position="471"/>
    </location>
</feature>
<feature type="sequence conflict" description="In Ref. 1; BAE42467." evidence="4" ref="1">
    <original>P</original>
    <variation>L</variation>
    <location>
        <position position="167"/>
    </location>
</feature>
<feature type="sequence conflict" description="In Ref. 1; BAE42467." evidence="4" ref="1">
    <original>N</original>
    <variation>D</variation>
    <location>
        <position position="331"/>
    </location>
</feature>
<feature type="sequence conflict" description="In Ref. 1; BAE42467." evidence="4" ref="1">
    <original>I</original>
    <variation>V</variation>
    <location>
        <position position="407"/>
    </location>
</feature>
<proteinExistence type="evidence at transcript level"/>
<sequence>MSGESGQPQPGPSHAGLYLEHPERDQAGVPGGVIRRADSQRRRSWIQKVIEQITGSPRQCVTLSEVVPVTVLAVQRYLLEDEPRDTVPKPPLYCYDVTISDGVYQEKCYLDPSLNFLVYQNILKVGIEMRISRVSCLYNEKRLGQGILCIDKVHCGESLDVISVETPFRNRAHEEKPERPLRGGKSHYLALWNNEDPYGDIWKTNKQPEEFNFNNIKIISLSHLELTWNSRKNFPALLVRVLHKSKLRYYGKPNKKMIEPYQTYLEVADSSGMVSVILWNALCPEWYKSLRVGLVLLLQDYTVKKSYPLRIQPDPADPQMKLISTMEICLNLRDPPTNIVIIPEKQLKSEWKLPKLINRFITRSELDDMPEKSICDVIGLLSFVGRVQRSKKKENSEDFWSYRWIHITDGTSEQPFIVQLFSTSQPEVFENIYPMTYFVCTQLKVVRNNSQVPKLLYLTTTNESRALTTGGHRGLPYTYDTKAKKIIQWIKTKTNLEAKNTVIGGYYPYPPVPETFSKYSRFIKAESLLTTISEVKKVIEDLQYREQKRIAIQGIITAIKYIPYKHSAGSAPAPEAFWNASRPSTSQAAGKEDHCHERGSKRSQDDRPMGSQHFQYTSKVLSLCAKRKILQGPSANPVPVPQPHSSAQMKGSKHNTPSQESSTAYTTGKSRRITNDRWESQLWQDKKFSLRDHLHYGHVDPESIPRKFILEHEKFLTQQFNSQPAKYIPPEGKPPKLDEFQSARSLGHFEVTILGLNHEIAIDVAFLPMYSPEDVQASQIDTFLTCMNFSCVYPPAAPLSGRLPDPKAVAGDIVKAAADLDRVHIIGILDICNLGNNKVEVCLQKIYTPE</sequence>
<keyword id="KW-0025">Alternative splicing</keyword>
<keyword id="KW-0158">Chromosome</keyword>
<keyword id="KW-0238">DNA-binding</keyword>
<keyword id="KW-1185">Reference proteome</keyword>
<evidence type="ECO:0000250" key="1">
    <source>
        <dbReference type="UniProtKB" id="Q6NSI4"/>
    </source>
</evidence>
<evidence type="ECO:0000256" key="2">
    <source>
        <dbReference type="SAM" id="MobiDB-lite"/>
    </source>
</evidence>
<evidence type="ECO:0000303" key="3">
    <source>
    </source>
</evidence>
<evidence type="ECO:0000305" key="4"/>
<organism>
    <name type="scientific">Mus musculus</name>
    <name type="common">Mouse</name>
    <dbReference type="NCBI Taxonomy" id="10090"/>
    <lineage>
        <taxon>Eukaryota</taxon>
        <taxon>Metazoa</taxon>
        <taxon>Chordata</taxon>
        <taxon>Craniata</taxon>
        <taxon>Vertebrata</taxon>
        <taxon>Euteleostomi</taxon>
        <taxon>Mammalia</taxon>
        <taxon>Eutheria</taxon>
        <taxon>Euarchontoglires</taxon>
        <taxon>Glires</taxon>
        <taxon>Rodentia</taxon>
        <taxon>Myomorpha</taxon>
        <taxon>Muroidea</taxon>
        <taxon>Muridae</taxon>
        <taxon>Murinae</taxon>
        <taxon>Mus</taxon>
        <taxon>Mus</taxon>
    </lineage>
</organism>
<comment type="function">
    <text evidence="1">Single-stranded DNA-binding protein recruited to replication forks to maintain genome stability. Prevents fork collapse by antagonizing the accumulation of RAD51 at forks to ensure the proper balance of fork remodeling and protection without interfering with the capacity of cells to complete homologous recombination of double-strand breaks.</text>
</comment>
<comment type="subcellular location">
    <subcellularLocation>
        <location evidence="1">Chromosome</location>
    </subcellularLocation>
    <text evidence="1">Recruited to replication forks.</text>
</comment>
<comment type="alternative products">
    <event type="alternative splicing"/>
    <isoform>
        <id>Q8C779-1</id>
        <name>1</name>
        <sequence type="displayed"/>
    </isoform>
    <isoform>
        <id>Q8C779-2</id>
        <name>2</name>
        <sequence type="described" ref="VSP_021184"/>
    </isoform>
</comment>
<reference key="1">
    <citation type="journal article" date="2005" name="Science">
        <title>The transcriptional landscape of the mammalian genome.</title>
        <authorList>
            <person name="Carninci P."/>
            <person name="Kasukawa T."/>
            <person name="Katayama S."/>
            <person name="Gough J."/>
            <person name="Frith M.C."/>
            <person name="Maeda N."/>
            <person name="Oyama R."/>
            <person name="Ravasi T."/>
            <person name="Lenhard B."/>
            <person name="Wells C."/>
            <person name="Kodzius R."/>
            <person name="Shimokawa K."/>
            <person name="Bajic V.B."/>
            <person name="Brenner S.E."/>
            <person name="Batalov S."/>
            <person name="Forrest A.R."/>
            <person name="Zavolan M."/>
            <person name="Davis M.J."/>
            <person name="Wilming L.G."/>
            <person name="Aidinis V."/>
            <person name="Allen J.E."/>
            <person name="Ambesi-Impiombato A."/>
            <person name="Apweiler R."/>
            <person name="Aturaliya R.N."/>
            <person name="Bailey T.L."/>
            <person name="Bansal M."/>
            <person name="Baxter L."/>
            <person name="Beisel K.W."/>
            <person name="Bersano T."/>
            <person name="Bono H."/>
            <person name="Chalk A.M."/>
            <person name="Chiu K.P."/>
            <person name="Choudhary V."/>
            <person name="Christoffels A."/>
            <person name="Clutterbuck D.R."/>
            <person name="Crowe M.L."/>
            <person name="Dalla E."/>
            <person name="Dalrymple B.P."/>
            <person name="de Bono B."/>
            <person name="Della Gatta G."/>
            <person name="di Bernardo D."/>
            <person name="Down T."/>
            <person name="Engstrom P."/>
            <person name="Fagiolini M."/>
            <person name="Faulkner G."/>
            <person name="Fletcher C.F."/>
            <person name="Fukushima T."/>
            <person name="Furuno M."/>
            <person name="Futaki S."/>
            <person name="Gariboldi M."/>
            <person name="Georgii-Hemming P."/>
            <person name="Gingeras T.R."/>
            <person name="Gojobori T."/>
            <person name="Green R.E."/>
            <person name="Gustincich S."/>
            <person name="Harbers M."/>
            <person name="Hayashi Y."/>
            <person name="Hensch T.K."/>
            <person name="Hirokawa N."/>
            <person name="Hill D."/>
            <person name="Huminiecki L."/>
            <person name="Iacono M."/>
            <person name="Ikeo K."/>
            <person name="Iwama A."/>
            <person name="Ishikawa T."/>
            <person name="Jakt M."/>
            <person name="Kanapin A."/>
            <person name="Katoh M."/>
            <person name="Kawasawa Y."/>
            <person name="Kelso J."/>
            <person name="Kitamura H."/>
            <person name="Kitano H."/>
            <person name="Kollias G."/>
            <person name="Krishnan S.P."/>
            <person name="Kruger A."/>
            <person name="Kummerfeld S.K."/>
            <person name="Kurochkin I.V."/>
            <person name="Lareau L.F."/>
            <person name="Lazarevic D."/>
            <person name="Lipovich L."/>
            <person name="Liu J."/>
            <person name="Liuni S."/>
            <person name="McWilliam S."/>
            <person name="Madan Babu M."/>
            <person name="Madera M."/>
            <person name="Marchionni L."/>
            <person name="Matsuda H."/>
            <person name="Matsuzawa S."/>
            <person name="Miki H."/>
            <person name="Mignone F."/>
            <person name="Miyake S."/>
            <person name="Morris K."/>
            <person name="Mottagui-Tabar S."/>
            <person name="Mulder N."/>
            <person name="Nakano N."/>
            <person name="Nakauchi H."/>
            <person name="Ng P."/>
            <person name="Nilsson R."/>
            <person name="Nishiguchi S."/>
            <person name="Nishikawa S."/>
            <person name="Nori F."/>
            <person name="Ohara O."/>
            <person name="Okazaki Y."/>
            <person name="Orlando V."/>
            <person name="Pang K.C."/>
            <person name="Pavan W.J."/>
            <person name="Pavesi G."/>
            <person name="Pesole G."/>
            <person name="Petrovsky N."/>
            <person name="Piazza S."/>
            <person name="Reed J."/>
            <person name="Reid J.F."/>
            <person name="Ring B.Z."/>
            <person name="Ringwald M."/>
            <person name="Rost B."/>
            <person name="Ruan Y."/>
            <person name="Salzberg S.L."/>
            <person name="Sandelin A."/>
            <person name="Schneider C."/>
            <person name="Schoenbach C."/>
            <person name="Sekiguchi K."/>
            <person name="Semple C.A."/>
            <person name="Seno S."/>
            <person name="Sessa L."/>
            <person name="Sheng Y."/>
            <person name="Shibata Y."/>
            <person name="Shimada H."/>
            <person name="Shimada K."/>
            <person name="Silva D."/>
            <person name="Sinclair B."/>
            <person name="Sperling S."/>
            <person name="Stupka E."/>
            <person name="Sugiura K."/>
            <person name="Sultana R."/>
            <person name="Takenaka Y."/>
            <person name="Taki K."/>
            <person name="Tammoja K."/>
            <person name="Tan S.L."/>
            <person name="Tang S."/>
            <person name="Taylor M.S."/>
            <person name="Tegner J."/>
            <person name="Teichmann S.A."/>
            <person name="Ueda H.R."/>
            <person name="van Nimwegen E."/>
            <person name="Verardo R."/>
            <person name="Wei C.L."/>
            <person name="Yagi K."/>
            <person name="Yamanishi H."/>
            <person name="Zabarovsky E."/>
            <person name="Zhu S."/>
            <person name="Zimmer A."/>
            <person name="Hide W."/>
            <person name="Bult C."/>
            <person name="Grimmond S.M."/>
            <person name="Teasdale R.D."/>
            <person name="Liu E.T."/>
            <person name="Brusic V."/>
            <person name="Quackenbush J."/>
            <person name="Wahlestedt C."/>
            <person name="Mattick J.S."/>
            <person name="Hume D.A."/>
            <person name="Kai C."/>
            <person name="Sasaki D."/>
            <person name="Tomaru Y."/>
            <person name="Fukuda S."/>
            <person name="Kanamori-Katayama M."/>
            <person name="Suzuki M."/>
            <person name="Aoki J."/>
            <person name="Arakawa T."/>
            <person name="Iida J."/>
            <person name="Imamura K."/>
            <person name="Itoh M."/>
            <person name="Kato T."/>
            <person name="Kawaji H."/>
            <person name="Kawagashira N."/>
            <person name="Kawashima T."/>
            <person name="Kojima M."/>
            <person name="Kondo S."/>
            <person name="Konno H."/>
            <person name="Nakano K."/>
            <person name="Ninomiya N."/>
            <person name="Nishio T."/>
            <person name="Okada M."/>
            <person name="Plessy C."/>
            <person name="Shibata K."/>
            <person name="Shiraki T."/>
            <person name="Suzuki S."/>
            <person name="Tagami M."/>
            <person name="Waki K."/>
            <person name="Watahiki A."/>
            <person name="Okamura-Oho Y."/>
            <person name="Suzuki H."/>
            <person name="Kawai J."/>
            <person name="Hayashizaki Y."/>
        </authorList>
    </citation>
    <scope>NUCLEOTIDE SEQUENCE [LARGE SCALE MRNA] (ISOFORMS 1 AND 2)</scope>
    <source>
        <strain>C57BL/6J</strain>
        <tissue>Fetal heart</tissue>
    </source>
</reference>
<reference key="2">
    <citation type="journal article" date="2009" name="PLoS Biol.">
        <title>Lineage-specific biology revealed by a finished genome assembly of the mouse.</title>
        <authorList>
            <person name="Church D.M."/>
            <person name="Goodstadt L."/>
            <person name="Hillier L.W."/>
            <person name="Zody M.C."/>
            <person name="Goldstein S."/>
            <person name="She X."/>
            <person name="Bult C.J."/>
            <person name="Agarwala R."/>
            <person name="Cherry J.L."/>
            <person name="DiCuccio M."/>
            <person name="Hlavina W."/>
            <person name="Kapustin Y."/>
            <person name="Meric P."/>
            <person name="Maglott D."/>
            <person name="Birtle Z."/>
            <person name="Marques A.C."/>
            <person name="Graves T."/>
            <person name="Zhou S."/>
            <person name="Teague B."/>
            <person name="Potamousis K."/>
            <person name="Churas C."/>
            <person name="Place M."/>
            <person name="Herschleb J."/>
            <person name="Runnheim R."/>
            <person name="Forrest D."/>
            <person name="Amos-Landgraf J."/>
            <person name="Schwartz D.C."/>
            <person name="Cheng Z."/>
            <person name="Lindblad-Toh K."/>
            <person name="Eichler E.E."/>
            <person name="Ponting C.P."/>
        </authorList>
    </citation>
    <scope>NUCLEOTIDE SEQUENCE [LARGE SCALE GENOMIC DNA]</scope>
    <source>
        <strain>C57BL/6J</strain>
    </source>
</reference>
<reference key="3">
    <citation type="journal article" date="2004" name="Genome Res.">
        <title>The status, quality, and expansion of the NIH full-length cDNA project: the Mammalian Gene Collection (MGC).</title>
        <authorList>
            <consortium name="The MGC Project Team"/>
        </authorList>
    </citation>
    <scope>NUCLEOTIDE SEQUENCE [LARGE SCALE MRNA] (ISOFORM 1)</scope>
</reference>
<accession>Q8C779</accession>
<accession>A2AGL6</accession>
<accession>Q3TB47</accession>
<gene>
    <name evidence="1" type="primary">Radx</name>
</gene>
<name>RADX_MOUSE</name>
<dbReference type="EMBL" id="AK052376">
    <property type="protein sequence ID" value="BAC34963.1"/>
    <property type="molecule type" value="mRNA"/>
</dbReference>
<dbReference type="EMBL" id="AK155588">
    <property type="protein sequence ID" value="BAE33336.1"/>
    <property type="molecule type" value="mRNA"/>
</dbReference>
<dbReference type="EMBL" id="AK171459">
    <property type="protein sequence ID" value="BAE42467.1"/>
    <property type="molecule type" value="mRNA"/>
</dbReference>
<dbReference type="EMBL" id="AL691424">
    <property type="status" value="NOT_ANNOTATED_CDS"/>
    <property type="molecule type" value="Genomic_DNA"/>
</dbReference>
<dbReference type="EMBL" id="BC113128">
    <property type="protein sequence ID" value="AAI13129.1"/>
    <property type="molecule type" value="mRNA"/>
</dbReference>
<dbReference type="CCDS" id="CCDS30434.1">
    <molecule id="Q8C779-1"/>
</dbReference>
<dbReference type="CCDS" id="CCDS85808.1">
    <molecule id="Q8C779-2"/>
</dbReference>
<dbReference type="RefSeq" id="NP_001333451.1">
    <molecule id="Q8C779-2"/>
    <property type="nucleotide sequence ID" value="NM_001346522.1"/>
</dbReference>
<dbReference type="RefSeq" id="NP_780535.1">
    <molecule id="Q8C779-1"/>
    <property type="nucleotide sequence ID" value="NM_175326.6"/>
</dbReference>
<dbReference type="SMR" id="Q8C779"/>
<dbReference type="FunCoup" id="Q8C779">
    <property type="interactions" value="416"/>
</dbReference>
<dbReference type="STRING" id="10090.ENSMUSP00000108653"/>
<dbReference type="iPTMnet" id="Q8C779"/>
<dbReference type="PhosphoSitePlus" id="Q8C779"/>
<dbReference type="PaxDb" id="10090-ENSMUSP00000108653"/>
<dbReference type="PeptideAtlas" id="Q8C779"/>
<dbReference type="ProteomicsDB" id="255073">
    <molecule id="Q8C779-1"/>
</dbReference>
<dbReference type="ProteomicsDB" id="255074">
    <molecule id="Q8C779-2"/>
</dbReference>
<dbReference type="Antibodypedia" id="348">
    <property type="antibodies" value="18 antibodies from 9 providers"/>
</dbReference>
<dbReference type="Ensembl" id="ENSMUST00000046763.13">
    <molecule id="Q8C779-2"/>
    <property type="protein sequence ID" value="ENSMUSP00000046045.7"/>
    <property type="gene ID" value="ENSMUSG00000042498.17"/>
</dbReference>
<dbReference type="Ensembl" id="ENSMUST00000113030.3">
    <molecule id="Q8C779-1"/>
    <property type="protein sequence ID" value="ENSMUSP00000108653.3"/>
    <property type="gene ID" value="ENSMUSG00000042498.17"/>
</dbReference>
<dbReference type="GeneID" id="102871"/>
<dbReference type="KEGG" id="mmu:102871"/>
<dbReference type="UCSC" id="uc009ukg.2">
    <molecule id="Q8C779-1"/>
    <property type="organism name" value="mouse"/>
</dbReference>
<dbReference type="UCSC" id="uc009ukh.2">
    <molecule id="Q8C779-2"/>
    <property type="organism name" value="mouse"/>
</dbReference>
<dbReference type="AGR" id="MGI:2147848"/>
<dbReference type="CTD" id="55086"/>
<dbReference type="MGI" id="MGI:2147848">
    <property type="gene designation" value="Radx"/>
</dbReference>
<dbReference type="VEuPathDB" id="HostDB:ENSMUSG00000042498"/>
<dbReference type="eggNOG" id="ENOG502QSE7">
    <property type="taxonomic scope" value="Eukaryota"/>
</dbReference>
<dbReference type="GeneTree" id="ENSGT00390000005094"/>
<dbReference type="HOGENOM" id="CLU_016770_0_0_1"/>
<dbReference type="InParanoid" id="Q8C779"/>
<dbReference type="OMA" id="TGCHKGQ"/>
<dbReference type="OrthoDB" id="5965770at2759"/>
<dbReference type="PhylomeDB" id="Q8C779"/>
<dbReference type="TreeFam" id="TF331019"/>
<dbReference type="BioGRID-ORCS" id="102871">
    <property type="hits" value="1 hit in 78 CRISPR screens"/>
</dbReference>
<dbReference type="ChiTaRS" id="Radx">
    <property type="organism name" value="mouse"/>
</dbReference>
<dbReference type="PRO" id="PR:Q8C779"/>
<dbReference type="Proteomes" id="UP000000589">
    <property type="component" value="Chromosome X"/>
</dbReference>
<dbReference type="RNAct" id="Q8C779">
    <property type="molecule type" value="protein"/>
</dbReference>
<dbReference type="Bgee" id="ENSMUSG00000042498">
    <property type="expression patterns" value="Expressed in embryonic post-anal tail and 46 other cell types or tissues"/>
</dbReference>
<dbReference type="GO" id="GO:0016607">
    <property type="term" value="C:nuclear speck"/>
    <property type="evidence" value="ECO:0007669"/>
    <property type="project" value="Ensembl"/>
</dbReference>
<dbReference type="GO" id="GO:0005657">
    <property type="term" value="C:replication fork"/>
    <property type="evidence" value="ECO:0000250"/>
    <property type="project" value="UniProtKB"/>
</dbReference>
<dbReference type="GO" id="GO:0003697">
    <property type="term" value="F:single-stranded DNA binding"/>
    <property type="evidence" value="ECO:0000250"/>
    <property type="project" value="UniProtKB"/>
</dbReference>
<dbReference type="GO" id="GO:2000042">
    <property type="term" value="P:negative regulation of double-strand break repair via homologous recombination"/>
    <property type="evidence" value="ECO:0000250"/>
    <property type="project" value="UniProtKB"/>
</dbReference>
<dbReference type="Gene3D" id="2.40.50.140">
    <property type="entry name" value="Nucleic acid-binding proteins"/>
    <property type="match status" value="1"/>
</dbReference>
<dbReference type="InterPro" id="IPR012340">
    <property type="entry name" value="NA-bd_OB-fold"/>
</dbReference>
<dbReference type="InterPro" id="IPR040893">
    <property type="entry name" value="RADX"/>
</dbReference>
<dbReference type="PANTHER" id="PTHR14944">
    <property type="entry name" value="RPA-RELATED PROTEIN RADX"/>
    <property type="match status" value="1"/>
</dbReference>
<dbReference type="PANTHER" id="PTHR14944:SF2">
    <property type="entry name" value="RPA-RELATED PROTEIN RADX"/>
    <property type="match status" value="1"/>
</dbReference>
<dbReference type="Pfam" id="PF17659">
    <property type="entry name" value="RADX"/>
    <property type="match status" value="1"/>
</dbReference>
<dbReference type="SUPFAM" id="SSF50249">
    <property type="entry name" value="Nucleic acid-binding proteins"/>
    <property type="match status" value="2"/>
</dbReference>